<sequence length="619" mass="71022">MEAEETMECLQEFPEHHKMILDRLNEQREQDRFTDITLIVDGHHFKAHKAVLAACSKFFYKFFQEFTQEPLVEIEGVSKMAFRHLIEFTYTAKLMIQGEEEANDVWKAAEFLQMLEAIKALEVRNKENSAPLEENTTGKNEAKKRKIAETSNVITESLPSAESEPVEIEVEIAEGTIEVEDEGIEALEEMASAKQSIKYIQSTGSSDDSALALLADITSKYRQGESKGQISEDDCASDPISKQVEGIEIVELQLSHVKDLFHCEKCNRSFKLFYHFKEHMKSHSTESFKCEICNKRYLRESAWKQHLNCYHLEEGGVSKKQRTGKKIHICQYCDKQFDHFGHFKEHLRKHTGEKPFECSNCHERFARNSTLKCHLTACQTGVGAKKGRKKLYECQVCNSVFNSWDQFKDHLVIHTGDKPNHCTLCDLWFMQGNELRRHLSDAHNISERIVTEEVLSVETHLQTEPVTSMTIIEQVGKVHVLPLLQVQVDSAQVTVEQVHPDLLQDSQVHDSQMTGLPEQVQVSYLEVGRIQTEEGTEVHVEELHVERVNQMPVEVQTELLEADLDHMTPEIMSQEEREPNHADAAMEEHEDAEGLETKPSEYSQARKTENDRTSLPVLE</sequence>
<dbReference type="EMBL" id="AY092766">
    <property type="protein sequence ID" value="AAM18207.1"/>
    <property type="molecule type" value="mRNA"/>
</dbReference>
<dbReference type="EMBL" id="AK011832">
    <property type="protein sequence ID" value="BAB27867.1"/>
    <property type="molecule type" value="mRNA"/>
</dbReference>
<dbReference type="EMBL" id="AK030398">
    <property type="protein sequence ID" value="BAC26943.1"/>
    <property type="molecule type" value="mRNA"/>
</dbReference>
<dbReference type="EMBL" id="AK047429">
    <property type="protein sequence ID" value="BAC33056.1"/>
    <property type="molecule type" value="mRNA"/>
</dbReference>
<dbReference type="EMBL" id="AK134257">
    <property type="protein sequence ID" value="BAE22067.1"/>
    <property type="molecule type" value="mRNA"/>
</dbReference>
<dbReference type="EMBL" id="AK135723">
    <property type="protein sequence ID" value="BAE22629.1"/>
    <property type="molecule type" value="mRNA"/>
</dbReference>
<dbReference type="EMBL" id="AK162903">
    <property type="protein sequence ID" value="BAE37106.1"/>
    <property type="molecule type" value="mRNA"/>
</dbReference>
<dbReference type="EMBL" id="BC048839">
    <property type="protein sequence ID" value="AAH48839.1"/>
    <property type="molecule type" value="mRNA"/>
</dbReference>
<dbReference type="EMBL" id="BC057991">
    <property type="protein sequence ID" value="AAH57991.1"/>
    <property type="molecule type" value="mRNA"/>
</dbReference>
<dbReference type="CCDS" id="CCDS56903.1">
    <molecule id="Q8K3J5-2"/>
</dbReference>
<dbReference type="CCDS" id="CCDS79245.1">
    <molecule id="Q8K3J5-1"/>
</dbReference>
<dbReference type="RefSeq" id="NP_001289476.1">
    <molecule id="Q8K3J5-1"/>
    <property type="nucleotide sequence ID" value="NM_001302547.1"/>
</dbReference>
<dbReference type="RefSeq" id="NP_001289477.1">
    <molecule id="Q8K3J5-2"/>
    <property type="nucleotide sequence ID" value="NM_001302548.1"/>
</dbReference>
<dbReference type="RefSeq" id="NP_001289478.1">
    <molecule id="Q8K3J5-1"/>
    <property type="nucleotide sequence ID" value="NM_001302549.1"/>
</dbReference>
<dbReference type="RefSeq" id="NP_001289479.1">
    <molecule id="Q8K3J5-1"/>
    <property type="nucleotide sequence ID" value="NM_001302550.1"/>
</dbReference>
<dbReference type="RefSeq" id="NP_082521.1">
    <molecule id="Q8K3J5-2"/>
    <property type="nucleotide sequence ID" value="NM_028245.4"/>
</dbReference>
<dbReference type="RefSeq" id="XP_006517829.1">
    <molecule id="Q8K3J5-1"/>
    <property type="nucleotide sequence ID" value="XM_006517766.1"/>
</dbReference>
<dbReference type="RefSeq" id="XP_006517832.1">
    <molecule id="Q8K3J5-1"/>
    <property type="nucleotide sequence ID" value="XM_006517769.3"/>
</dbReference>
<dbReference type="RefSeq" id="XP_017171099.1">
    <molecule id="Q8K3J5-2"/>
    <property type="nucleotide sequence ID" value="XM_017315610.1"/>
</dbReference>
<dbReference type="SMR" id="Q8K3J5"/>
<dbReference type="BioGRID" id="215385">
    <property type="interactions" value="1"/>
</dbReference>
<dbReference type="FunCoup" id="Q8K3J5">
    <property type="interactions" value="3352"/>
</dbReference>
<dbReference type="STRING" id="10090.ENSMUSP00000153044"/>
<dbReference type="iPTMnet" id="Q8K3J5"/>
<dbReference type="PhosphoSitePlus" id="Q8K3J5"/>
<dbReference type="PaxDb" id="10090-ENSMUSP00000136867"/>
<dbReference type="PeptideAtlas" id="Q8K3J5"/>
<dbReference type="ProteomicsDB" id="302073">
    <molecule id="Q8K3J5-1"/>
</dbReference>
<dbReference type="ProteomicsDB" id="302074">
    <molecule id="Q8K3J5-2"/>
</dbReference>
<dbReference type="ProteomicsDB" id="302075">
    <molecule id="Q8K3J5-3"/>
</dbReference>
<dbReference type="Antibodypedia" id="23236">
    <property type="antibodies" value="274 antibodies from 23 providers"/>
</dbReference>
<dbReference type="DNASU" id="72465"/>
<dbReference type="Ensembl" id="ENSMUST00000177916.8">
    <molecule id="Q8K3J5-1"/>
    <property type="protein sequence ID" value="ENSMUSP00000136867.2"/>
    <property type="gene ID" value="ENSMUSG00000094870.9"/>
</dbReference>
<dbReference type="Ensembl" id="ENSMUST00000178271.3">
    <molecule id="Q8K3J5-2"/>
    <property type="protein sequence ID" value="ENSMUSP00000136019.2"/>
    <property type="gene ID" value="ENSMUSG00000094870.9"/>
</dbReference>
<dbReference type="Ensembl" id="ENSMUST00000223722.2">
    <molecule id="Q8K3J5-1"/>
    <property type="protein sequence ID" value="ENSMUSP00000153044.2"/>
    <property type="gene ID" value="ENSMUSG00000094870.9"/>
</dbReference>
<dbReference type="Ensembl" id="ENSMUST00000223813.2">
    <molecule id="Q8K3J5-2"/>
    <property type="protein sequence ID" value="ENSMUSP00000152941.2"/>
    <property type="gene ID" value="ENSMUSG00000094870.9"/>
</dbReference>
<dbReference type="Ensembl" id="ENSMUST00000224946.2">
    <molecule id="Q8K3J5-3"/>
    <property type="protein sequence ID" value="ENSMUSP00000153517.2"/>
    <property type="gene ID" value="ENSMUSG00000094870.9"/>
</dbReference>
<dbReference type="GeneID" id="72465"/>
<dbReference type="KEGG" id="mmu:72465"/>
<dbReference type="UCSC" id="uc007rzn.2">
    <molecule id="Q8K3J5-1"/>
    <property type="organism name" value="mouse"/>
</dbReference>
<dbReference type="UCSC" id="uc007rzo.2">
    <molecule id="Q8K3J5-2"/>
    <property type="organism name" value="mouse"/>
</dbReference>
<dbReference type="UCSC" id="uc007rzq.2">
    <molecule id="Q8K3J5-3"/>
    <property type="organism name" value="mouse"/>
</dbReference>
<dbReference type="AGR" id="MGI:1919715"/>
<dbReference type="CTD" id="72465"/>
<dbReference type="MGI" id="MGI:1919715">
    <property type="gene designation" value="Zfp131"/>
</dbReference>
<dbReference type="VEuPathDB" id="HostDB:ENSMUSG00000094870"/>
<dbReference type="eggNOG" id="KOG1721">
    <property type="taxonomic scope" value="Eukaryota"/>
</dbReference>
<dbReference type="GeneTree" id="ENSGT00940000154668"/>
<dbReference type="HOGENOM" id="CLU_031851_0_0_1"/>
<dbReference type="InParanoid" id="Q8K3J5"/>
<dbReference type="OMA" id="NQMQMEV"/>
<dbReference type="OrthoDB" id="624345at2759"/>
<dbReference type="PhylomeDB" id="Q8K3J5"/>
<dbReference type="TreeFam" id="TF331428"/>
<dbReference type="Reactome" id="R-MMU-3899300">
    <property type="pathway name" value="SUMOylation of transcription cofactors"/>
</dbReference>
<dbReference type="BioGRID-ORCS" id="72465">
    <property type="hits" value="25 hits in 78 CRISPR screens"/>
</dbReference>
<dbReference type="ChiTaRS" id="Zfp131">
    <property type="organism name" value="mouse"/>
</dbReference>
<dbReference type="PRO" id="PR:Q8K3J5"/>
<dbReference type="Proteomes" id="UP000000589">
    <property type="component" value="Chromosome 13"/>
</dbReference>
<dbReference type="RNAct" id="Q8K3J5">
    <property type="molecule type" value="protein"/>
</dbReference>
<dbReference type="Bgee" id="ENSMUSG00000094870">
    <property type="expression patterns" value="Expressed in cleaving embryo and 266 other cell types or tissues"/>
</dbReference>
<dbReference type="ExpressionAtlas" id="Q8K3J5">
    <property type="expression patterns" value="baseline and differential"/>
</dbReference>
<dbReference type="GO" id="GO:0045111">
    <property type="term" value="C:intermediate filament cytoskeleton"/>
    <property type="evidence" value="ECO:0007669"/>
    <property type="project" value="Ensembl"/>
</dbReference>
<dbReference type="GO" id="GO:0005654">
    <property type="term" value="C:nucleoplasm"/>
    <property type="evidence" value="ECO:0007669"/>
    <property type="project" value="Ensembl"/>
</dbReference>
<dbReference type="GO" id="GO:0001228">
    <property type="term" value="F:DNA-binding transcription activator activity, RNA polymerase II-specific"/>
    <property type="evidence" value="ECO:0000315"/>
    <property type="project" value="NTNU_SB"/>
</dbReference>
<dbReference type="GO" id="GO:0043565">
    <property type="term" value="F:sequence-specific DNA binding"/>
    <property type="evidence" value="ECO:0000315"/>
    <property type="project" value="NTNU_SB"/>
</dbReference>
<dbReference type="GO" id="GO:0008270">
    <property type="term" value="F:zinc ion binding"/>
    <property type="evidence" value="ECO:0007669"/>
    <property type="project" value="UniProtKB-KW"/>
</dbReference>
<dbReference type="GO" id="GO:0045944">
    <property type="term" value="P:positive regulation of transcription by RNA polymerase II"/>
    <property type="evidence" value="ECO:0000315"/>
    <property type="project" value="NTNU_SB"/>
</dbReference>
<dbReference type="CDD" id="cd18221">
    <property type="entry name" value="BTB_POZ_ZBTB35_ZNF131"/>
    <property type="match status" value="1"/>
</dbReference>
<dbReference type="FunFam" id="3.30.160.60:FF:000498">
    <property type="entry name" value="Putative zinc finger protein 131"/>
    <property type="match status" value="1"/>
</dbReference>
<dbReference type="FunFam" id="3.30.160.60:FF:000539">
    <property type="entry name" value="Putative zinc finger protein 131"/>
    <property type="match status" value="1"/>
</dbReference>
<dbReference type="FunFam" id="3.30.160.60:FF:000552">
    <property type="entry name" value="Zinc finger protein 131"/>
    <property type="match status" value="1"/>
</dbReference>
<dbReference type="FunFam" id="3.30.710.10:FF:000041">
    <property type="entry name" value="Zinc finger protein 131"/>
    <property type="match status" value="1"/>
</dbReference>
<dbReference type="FunFam" id="3.30.160.60:FF:001444">
    <property type="entry name" value="zinc finger protein 131 isoform X1"/>
    <property type="match status" value="1"/>
</dbReference>
<dbReference type="Gene3D" id="3.30.160.60">
    <property type="entry name" value="Classic Zinc Finger"/>
    <property type="match status" value="4"/>
</dbReference>
<dbReference type="Gene3D" id="3.30.710.10">
    <property type="entry name" value="Potassium Channel Kv1.1, Chain A"/>
    <property type="match status" value="1"/>
</dbReference>
<dbReference type="InterPro" id="IPR000210">
    <property type="entry name" value="BTB/POZ_dom"/>
</dbReference>
<dbReference type="InterPro" id="IPR011333">
    <property type="entry name" value="SKP1/BTB/POZ_sf"/>
</dbReference>
<dbReference type="InterPro" id="IPR036236">
    <property type="entry name" value="Znf_C2H2_sf"/>
</dbReference>
<dbReference type="InterPro" id="IPR013087">
    <property type="entry name" value="Znf_C2H2_type"/>
</dbReference>
<dbReference type="PANTHER" id="PTHR24394">
    <property type="entry name" value="ZINC FINGER PROTEIN"/>
    <property type="match status" value="1"/>
</dbReference>
<dbReference type="PANTHER" id="PTHR24394:SF55">
    <property type="entry name" value="ZINC FINGER PROTEIN 131"/>
    <property type="match status" value="1"/>
</dbReference>
<dbReference type="Pfam" id="PF00651">
    <property type="entry name" value="BTB"/>
    <property type="match status" value="1"/>
</dbReference>
<dbReference type="Pfam" id="PF12874">
    <property type="entry name" value="zf-met"/>
    <property type="match status" value="2"/>
</dbReference>
<dbReference type="SMART" id="SM00225">
    <property type="entry name" value="BTB"/>
    <property type="match status" value="1"/>
</dbReference>
<dbReference type="SMART" id="SM00355">
    <property type="entry name" value="ZnF_C2H2"/>
    <property type="match status" value="6"/>
</dbReference>
<dbReference type="SUPFAM" id="SSF57667">
    <property type="entry name" value="beta-beta-alpha zinc fingers"/>
    <property type="match status" value="3"/>
</dbReference>
<dbReference type="SUPFAM" id="SSF54695">
    <property type="entry name" value="POZ domain"/>
    <property type="match status" value="1"/>
</dbReference>
<dbReference type="PROSITE" id="PS50097">
    <property type="entry name" value="BTB"/>
    <property type="match status" value="1"/>
</dbReference>
<dbReference type="PROSITE" id="PS00028">
    <property type="entry name" value="ZINC_FINGER_C2H2_1"/>
    <property type="match status" value="5"/>
</dbReference>
<dbReference type="PROSITE" id="PS50157">
    <property type="entry name" value="ZINC_FINGER_C2H2_2"/>
    <property type="match status" value="5"/>
</dbReference>
<reference key="1">
    <citation type="journal article" date="2002" name="Biochem. Biophys. Res. Commun.">
        <title>The murine BTB/POZ zinc finger gene Znf131: predominant expression in the developing central nervous system, in adult brain, testis, and thymus.</title>
        <authorList>
            <person name="Trappe R."/>
            <person name="Buddenberg P."/>
            <person name="Uedelhoven J."/>
            <person name="Glaser B."/>
            <person name="Buck A."/>
            <person name="Engel W."/>
            <person name="Burfeind P."/>
        </authorList>
    </citation>
    <scope>NUCLEOTIDE SEQUENCE [MRNA] (ISOFORMS 1 AND 2)</scope>
    <scope>FUNCTION</scope>
    <scope>TISSUE SPECIFICITY</scope>
    <scope>DEVELOPMENTAL STAGE</scope>
    <scope>ALTERNATIVE SPLICING</scope>
    <source>
        <strain>C57BL/6J</strain>
        <tissue>Testis</tissue>
    </source>
</reference>
<reference key="2">
    <citation type="journal article" date="2005" name="Science">
        <title>The transcriptional landscape of the mammalian genome.</title>
        <authorList>
            <person name="Carninci P."/>
            <person name="Kasukawa T."/>
            <person name="Katayama S."/>
            <person name="Gough J."/>
            <person name="Frith M.C."/>
            <person name="Maeda N."/>
            <person name="Oyama R."/>
            <person name="Ravasi T."/>
            <person name="Lenhard B."/>
            <person name="Wells C."/>
            <person name="Kodzius R."/>
            <person name="Shimokawa K."/>
            <person name="Bajic V.B."/>
            <person name="Brenner S.E."/>
            <person name="Batalov S."/>
            <person name="Forrest A.R."/>
            <person name="Zavolan M."/>
            <person name="Davis M.J."/>
            <person name="Wilming L.G."/>
            <person name="Aidinis V."/>
            <person name="Allen J.E."/>
            <person name="Ambesi-Impiombato A."/>
            <person name="Apweiler R."/>
            <person name="Aturaliya R.N."/>
            <person name="Bailey T.L."/>
            <person name="Bansal M."/>
            <person name="Baxter L."/>
            <person name="Beisel K.W."/>
            <person name="Bersano T."/>
            <person name="Bono H."/>
            <person name="Chalk A.M."/>
            <person name="Chiu K.P."/>
            <person name="Choudhary V."/>
            <person name="Christoffels A."/>
            <person name="Clutterbuck D.R."/>
            <person name="Crowe M.L."/>
            <person name="Dalla E."/>
            <person name="Dalrymple B.P."/>
            <person name="de Bono B."/>
            <person name="Della Gatta G."/>
            <person name="di Bernardo D."/>
            <person name="Down T."/>
            <person name="Engstrom P."/>
            <person name="Fagiolini M."/>
            <person name="Faulkner G."/>
            <person name="Fletcher C.F."/>
            <person name="Fukushima T."/>
            <person name="Furuno M."/>
            <person name="Futaki S."/>
            <person name="Gariboldi M."/>
            <person name="Georgii-Hemming P."/>
            <person name="Gingeras T.R."/>
            <person name="Gojobori T."/>
            <person name="Green R.E."/>
            <person name="Gustincich S."/>
            <person name="Harbers M."/>
            <person name="Hayashi Y."/>
            <person name="Hensch T.K."/>
            <person name="Hirokawa N."/>
            <person name="Hill D."/>
            <person name="Huminiecki L."/>
            <person name="Iacono M."/>
            <person name="Ikeo K."/>
            <person name="Iwama A."/>
            <person name="Ishikawa T."/>
            <person name="Jakt M."/>
            <person name="Kanapin A."/>
            <person name="Katoh M."/>
            <person name="Kawasawa Y."/>
            <person name="Kelso J."/>
            <person name="Kitamura H."/>
            <person name="Kitano H."/>
            <person name="Kollias G."/>
            <person name="Krishnan S.P."/>
            <person name="Kruger A."/>
            <person name="Kummerfeld S.K."/>
            <person name="Kurochkin I.V."/>
            <person name="Lareau L.F."/>
            <person name="Lazarevic D."/>
            <person name="Lipovich L."/>
            <person name="Liu J."/>
            <person name="Liuni S."/>
            <person name="McWilliam S."/>
            <person name="Madan Babu M."/>
            <person name="Madera M."/>
            <person name="Marchionni L."/>
            <person name="Matsuda H."/>
            <person name="Matsuzawa S."/>
            <person name="Miki H."/>
            <person name="Mignone F."/>
            <person name="Miyake S."/>
            <person name="Morris K."/>
            <person name="Mottagui-Tabar S."/>
            <person name="Mulder N."/>
            <person name="Nakano N."/>
            <person name="Nakauchi H."/>
            <person name="Ng P."/>
            <person name="Nilsson R."/>
            <person name="Nishiguchi S."/>
            <person name="Nishikawa S."/>
            <person name="Nori F."/>
            <person name="Ohara O."/>
            <person name="Okazaki Y."/>
            <person name="Orlando V."/>
            <person name="Pang K.C."/>
            <person name="Pavan W.J."/>
            <person name="Pavesi G."/>
            <person name="Pesole G."/>
            <person name="Petrovsky N."/>
            <person name="Piazza S."/>
            <person name="Reed J."/>
            <person name="Reid J.F."/>
            <person name="Ring B.Z."/>
            <person name="Ringwald M."/>
            <person name="Rost B."/>
            <person name="Ruan Y."/>
            <person name="Salzberg S.L."/>
            <person name="Sandelin A."/>
            <person name="Schneider C."/>
            <person name="Schoenbach C."/>
            <person name="Sekiguchi K."/>
            <person name="Semple C.A."/>
            <person name="Seno S."/>
            <person name="Sessa L."/>
            <person name="Sheng Y."/>
            <person name="Shibata Y."/>
            <person name="Shimada H."/>
            <person name="Shimada K."/>
            <person name="Silva D."/>
            <person name="Sinclair B."/>
            <person name="Sperling S."/>
            <person name="Stupka E."/>
            <person name="Sugiura K."/>
            <person name="Sultana R."/>
            <person name="Takenaka Y."/>
            <person name="Taki K."/>
            <person name="Tammoja K."/>
            <person name="Tan S.L."/>
            <person name="Tang S."/>
            <person name="Taylor M.S."/>
            <person name="Tegner J."/>
            <person name="Teichmann S.A."/>
            <person name="Ueda H.R."/>
            <person name="van Nimwegen E."/>
            <person name="Verardo R."/>
            <person name="Wei C.L."/>
            <person name="Yagi K."/>
            <person name="Yamanishi H."/>
            <person name="Zabarovsky E."/>
            <person name="Zhu S."/>
            <person name="Zimmer A."/>
            <person name="Hide W."/>
            <person name="Bult C."/>
            <person name="Grimmond S.M."/>
            <person name="Teasdale R.D."/>
            <person name="Liu E.T."/>
            <person name="Brusic V."/>
            <person name="Quackenbush J."/>
            <person name="Wahlestedt C."/>
            <person name="Mattick J.S."/>
            <person name="Hume D.A."/>
            <person name="Kai C."/>
            <person name="Sasaki D."/>
            <person name="Tomaru Y."/>
            <person name="Fukuda S."/>
            <person name="Kanamori-Katayama M."/>
            <person name="Suzuki M."/>
            <person name="Aoki J."/>
            <person name="Arakawa T."/>
            <person name="Iida J."/>
            <person name="Imamura K."/>
            <person name="Itoh M."/>
            <person name="Kato T."/>
            <person name="Kawaji H."/>
            <person name="Kawagashira N."/>
            <person name="Kawashima T."/>
            <person name="Kojima M."/>
            <person name="Kondo S."/>
            <person name="Konno H."/>
            <person name="Nakano K."/>
            <person name="Ninomiya N."/>
            <person name="Nishio T."/>
            <person name="Okada M."/>
            <person name="Plessy C."/>
            <person name="Shibata K."/>
            <person name="Shiraki T."/>
            <person name="Suzuki S."/>
            <person name="Tagami M."/>
            <person name="Waki K."/>
            <person name="Watahiki A."/>
            <person name="Okamura-Oho Y."/>
            <person name="Suzuki H."/>
            <person name="Kawai J."/>
            <person name="Hayashizaki Y."/>
        </authorList>
    </citation>
    <scope>NUCLEOTIDE SEQUENCE [LARGE SCALE MRNA] (ISOFORMS 1; 2 AND 3)</scope>
    <source>
        <strain>C57BL/6J</strain>
    </source>
</reference>
<reference key="3">
    <citation type="journal article" date="2004" name="Genome Res.">
        <title>The status, quality, and expansion of the NIH full-length cDNA project: the Mammalian Gene Collection (MGC).</title>
        <authorList>
            <consortium name="The MGC Project Team"/>
        </authorList>
    </citation>
    <scope>NUCLEOTIDE SEQUENCE [LARGE SCALE MRNA] (ISOFORM 1)</scope>
    <scope>NUCLEOTIDE SEQUENCE [LARGE SCALE MRNA] OF 92-619 (ISOFORM 2)</scope>
    <source>
        <strain>FVB/N</strain>
        <tissue>Mammary tumor</tissue>
    </source>
</reference>
<reference key="4">
    <citation type="journal article" date="2010" name="Cell">
        <title>A tissue-specific atlas of mouse protein phosphorylation and expression.</title>
        <authorList>
            <person name="Huttlin E.L."/>
            <person name="Jedrychowski M.P."/>
            <person name="Elias J.E."/>
            <person name="Goswami T."/>
            <person name="Rad R."/>
            <person name="Beausoleil S.A."/>
            <person name="Villen J."/>
            <person name="Haas W."/>
            <person name="Sowa M.E."/>
            <person name="Gygi S.P."/>
        </authorList>
    </citation>
    <scope>PHOSPHORYLATION [LARGE SCALE ANALYSIS] AT SER-231</scope>
    <scope>IDENTIFICATION BY MASS SPECTROMETRY [LARGE SCALE ANALYSIS]</scope>
    <source>
        <tissue>Kidney</tissue>
        <tissue>Lung</tissue>
    </source>
</reference>
<evidence type="ECO:0000250" key="1"/>
<evidence type="ECO:0000250" key="2">
    <source>
        <dbReference type="UniProtKB" id="P52739"/>
    </source>
</evidence>
<evidence type="ECO:0000255" key="3">
    <source>
        <dbReference type="PROSITE-ProRule" id="PRU00037"/>
    </source>
</evidence>
<evidence type="ECO:0000255" key="4">
    <source>
        <dbReference type="PROSITE-ProRule" id="PRU00042"/>
    </source>
</evidence>
<evidence type="ECO:0000256" key="5">
    <source>
        <dbReference type="SAM" id="MobiDB-lite"/>
    </source>
</evidence>
<evidence type="ECO:0000269" key="6">
    <source>
    </source>
</evidence>
<evidence type="ECO:0000303" key="7">
    <source>
    </source>
</evidence>
<evidence type="ECO:0000303" key="8">
    <source>
    </source>
</evidence>
<evidence type="ECO:0000303" key="9">
    <source>
    </source>
</evidence>
<evidence type="ECO:0000305" key="10"/>
<evidence type="ECO:0007744" key="11">
    <source>
    </source>
</evidence>
<protein>
    <recommendedName>
        <fullName>Zinc finger protein 131</fullName>
    </recommendedName>
</protein>
<accession>Q8K3J5</accession>
<accession>Q3UYZ4</accession>
<accession>Q80UU7</accession>
<accession>Q8C8D0</accession>
<accession>Q9D042</accession>
<keyword id="KW-0025">Alternative splicing</keyword>
<keyword id="KW-0238">DNA-binding</keyword>
<keyword id="KW-1017">Isopeptide bond</keyword>
<keyword id="KW-0479">Metal-binding</keyword>
<keyword id="KW-0539">Nucleus</keyword>
<keyword id="KW-0597">Phosphoprotein</keyword>
<keyword id="KW-1185">Reference proteome</keyword>
<keyword id="KW-0677">Repeat</keyword>
<keyword id="KW-0678">Repressor</keyword>
<keyword id="KW-0804">Transcription</keyword>
<keyword id="KW-0805">Transcription regulation</keyword>
<keyword id="KW-0832">Ubl conjugation</keyword>
<keyword id="KW-0862">Zinc</keyword>
<keyword id="KW-0863">Zinc-finger</keyword>
<comment type="function">
    <text evidence="1 6">May be involved in transcriptional regulation as a repressor of ESR1/ER-alpha signaling (By similarity). Plays a role during development and organogenesis as well as in the function of the adult central nervous system.</text>
</comment>
<comment type="subcellular location">
    <subcellularLocation>
        <location evidence="1">Nucleus</location>
    </subcellularLocation>
</comment>
<comment type="alternative products">
    <event type="alternative splicing"/>
    <isoform>
        <id>Q8K3J5-1</id>
        <name>1</name>
        <sequence type="displayed"/>
    </isoform>
    <isoform>
        <id>Q8K3J5-2</id>
        <name>2</name>
        <sequence type="described" ref="VSP_016924"/>
    </isoform>
    <isoform>
        <id>Q8K3J5-3</id>
        <name>3</name>
        <sequence type="described" ref="VSP_016925 VSP_016926"/>
    </isoform>
</comment>
<comment type="tissue specificity">
    <text evidence="6">Ubiquitously expressed. Predominant expression is found in the developing central nervous system with strongest signals in the forebrain, midbrain, and hindbrain areas and in the neural tube.</text>
</comment>
<comment type="developmental stage">
    <text evidence="6">Expression found as early as 8.5 dpc. High expression is found in the developing limb buds of embryos.</text>
</comment>
<comment type="PTM">
    <text evidence="1">Monosumoylated at Lys-598 by CBX4 and UHRF2. Sumoylation may potentiate ZNF131 inhibition of estrogen signaling. Sumoylation does not interfere with ubiquitination (By similarity).</text>
</comment>
<comment type="PTM">
    <text evidence="1">Ubiquitinated.</text>
</comment>
<comment type="similarity">
    <text evidence="10">Belongs to the krueppel C2H2-type zinc-finger protein family.</text>
</comment>
<name>ZN131_MOUSE</name>
<gene>
    <name type="primary">Znf131</name>
    <name type="synonym">Zfp131</name>
</gene>
<proteinExistence type="evidence at protein level"/>
<organism>
    <name type="scientific">Mus musculus</name>
    <name type="common">Mouse</name>
    <dbReference type="NCBI Taxonomy" id="10090"/>
    <lineage>
        <taxon>Eukaryota</taxon>
        <taxon>Metazoa</taxon>
        <taxon>Chordata</taxon>
        <taxon>Craniata</taxon>
        <taxon>Vertebrata</taxon>
        <taxon>Euteleostomi</taxon>
        <taxon>Mammalia</taxon>
        <taxon>Eutheria</taxon>
        <taxon>Euarchontoglires</taxon>
        <taxon>Glires</taxon>
        <taxon>Rodentia</taxon>
        <taxon>Myomorpha</taxon>
        <taxon>Muroidea</taxon>
        <taxon>Muridae</taxon>
        <taxon>Murinae</taxon>
        <taxon>Mus</taxon>
        <taxon>Mus</taxon>
    </lineage>
</organism>
<feature type="chain" id="PRO_0000047414" description="Zinc finger protein 131">
    <location>
        <begin position="1"/>
        <end position="619"/>
    </location>
</feature>
<feature type="domain" description="BTB" evidence="3">
    <location>
        <begin position="34"/>
        <end position="98"/>
    </location>
</feature>
<feature type="zinc finger region" description="C2H2-type 1" evidence="4">
    <location>
        <begin position="261"/>
        <end position="283"/>
    </location>
</feature>
<feature type="zinc finger region" description="C2H2-type 2" evidence="4">
    <location>
        <begin position="288"/>
        <end position="311"/>
    </location>
</feature>
<feature type="zinc finger region" description="C2H2-type 3" evidence="4">
    <location>
        <begin position="328"/>
        <end position="350"/>
    </location>
</feature>
<feature type="zinc finger region" description="C2H2-type 4; degenerate" evidence="4">
    <location>
        <begin position="356"/>
        <end position="381"/>
    </location>
</feature>
<feature type="zinc finger region" description="C2H2-type 5" evidence="4">
    <location>
        <begin position="392"/>
        <end position="414"/>
    </location>
</feature>
<feature type="zinc finger region" description="C2H2-type 6" evidence="4">
    <location>
        <begin position="420"/>
        <end position="443"/>
    </location>
</feature>
<feature type="region of interest" description="Disordered" evidence="5">
    <location>
        <begin position="574"/>
        <end position="619"/>
    </location>
</feature>
<feature type="short sequence motif" description="Nuclear localization signal 1" evidence="1">
    <location>
        <begin position="137"/>
        <end position="148"/>
    </location>
</feature>
<feature type="short sequence motif" description="Nuclear localization signal 2" evidence="1">
    <location>
        <begin position="317"/>
        <end position="328"/>
    </location>
</feature>
<feature type="compositionally biased region" description="Basic and acidic residues" evidence="5">
    <location>
        <begin position="574"/>
        <end position="587"/>
    </location>
</feature>
<feature type="compositionally biased region" description="Basic and acidic residues" evidence="5">
    <location>
        <begin position="595"/>
        <end position="612"/>
    </location>
</feature>
<feature type="modified residue" description="Phosphoserine" evidence="11">
    <location>
        <position position="231"/>
    </location>
</feature>
<feature type="cross-link" description="Glycyl lysine isopeptide (Lys-Gly) (interchain with G-Cter in SUMO2)" evidence="2">
    <location>
        <position position="289"/>
    </location>
</feature>
<feature type="cross-link" description="Glycyl lysine isopeptide (Lys-Gly) (interchain with G-Cter in SUMO2)" evidence="2">
    <location>
        <position position="295"/>
    </location>
</feature>
<feature type="cross-link" description="Glycyl lysine isopeptide (Lys-Gly) (interchain with G-Cter in SUMO)" evidence="1">
    <location>
        <position position="598"/>
    </location>
</feature>
<feature type="splice variant" id="VSP_016924" description="In isoform 2." evidence="7 8 9">
    <location>
        <begin position="244"/>
        <end position="277"/>
    </location>
</feature>
<feature type="splice variant" id="VSP_016925" description="In isoform 3." evidence="9">
    <original>E</original>
    <variation>N</variation>
    <location>
        <position position="353"/>
    </location>
</feature>
<feature type="splice variant" id="VSP_016926" description="In isoform 3." evidence="9">
    <location>
        <begin position="354"/>
        <end position="619"/>
    </location>
</feature>
<feature type="sequence conflict" description="In Ref. 2; BAE22067." evidence="10" ref="2">
    <original>M</original>
    <variation>V</variation>
    <location>
        <position position="80"/>
    </location>
</feature>
<feature type="sequence conflict" description="In Ref. 2; BAE22067." evidence="10" ref="2">
    <original>V</original>
    <variation>E</variation>
    <location>
        <position position="105"/>
    </location>
</feature>
<feature type="sequence conflict" description="In Ref. 2; BAE22067." evidence="10" ref="2">
    <original>T</original>
    <variation>A</variation>
    <location>
        <position position="218"/>
    </location>
</feature>
<feature type="sequence conflict" description="In Ref. 3; AAH48839." evidence="10" ref="3">
    <original>W</original>
    <variation>R</variation>
    <location>
        <position position="404"/>
    </location>
</feature>